<evidence type="ECO:0000250" key="1">
    <source>
        <dbReference type="UniProtKB" id="Q92685"/>
    </source>
</evidence>
<evidence type="ECO:0000255" key="2"/>
<evidence type="ECO:0000305" key="3"/>
<evidence type="ECO:0000312" key="4">
    <source>
        <dbReference type="MGI" id="MGI:1098592"/>
    </source>
</evidence>
<organism>
    <name type="scientific">Mus musculus</name>
    <name type="common">Mouse</name>
    <dbReference type="NCBI Taxonomy" id="10090"/>
    <lineage>
        <taxon>Eukaryota</taxon>
        <taxon>Metazoa</taxon>
        <taxon>Chordata</taxon>
        <taxon>Craniata</taxon>
        <taxon>Vertebrata</taxon>
        <taxon>Euteleostomi</taxon>
        <taxon>Mammalia</taxon>
        <taxon>Eutheria</taxon>
        <taxon>Euarchontoglires</taxon>
        <taxon>Glires</taxon>
        <taxon>Rodentia</taxon>
        <taxon>Myomorpha</taxon>
        <taxon>Muroidea</taxon>
        <taxon>Muridae</taxon>
        <taxon>Murinae</taxon>
        <taxon>Mus</taxon>
        <taxon>Mus</taxon>
    </lineage>
</organism>
<name>ALG3_MOUSE</name>
<sequence length="438" mass="50186">MAAGLRKRGQPASVGQPAGIWKQWLQRAWQERYLLLREPRYTLLVASCLCIAEVGITFWVIHRVAYTEIDWKAYMAQVEGFINGTYDYTQLQGDTGPLVYPAGFLYIFTGLFYATDRGTDIPMAQNIFAVLYLVTLVLVFLIYHQTSKVPPFVFFFMCCASYRVHSIFVLRLFNDPVAMALLFLSINLFLAQCWSWGCCCFSLAVSVKMNVLLFAPGLLFLLLTQFGFRGALPKLAICAALQVVLGLPFLLENPIGYLSRSFDLGRQFLFQWTVNWRFLPETIFLHRAFHLALLAAHLSLLLLFALCRWHRTGESILALLKDPSKRKVPPQALTPNQIVSILFTSNFIGICFSRSLHYQFYVWYFHTLPYLLWAMPARWLTHLLRLLVLGLIELSWNTYPSTSFSSAALHLCHAVVLLQLWLSPESFPKSIQPSRKTH</sequence>
<comment type="function">
    <text evidence="1">Dol-P-Man:Man(5)GlcNAc(2)-PP-Dol alpha-1,3-mannosyltransferase that operates in the biosynthetic pathway of dolichol-linked oligosaccharides, the glycan precursors employed in protein asparagine (N)-glycosylation. The assembly of dolichol-linked oligosaccharides begins on the cytosolic side of the endoplasmic reticulum membrane and finishes in its lumen. The sequential addition of sugars to dolichol pyrophosphate produces dolichol-linked oligosaccharides containing fourteen sugars, including two GlcNAcs, nine mannoses and three glucoses. Once assembled, the oligosaccharide is transferred from the lipid to nascent proteins by oligosaccharyltransferases. In the lumen of the endoplasmic reticulum, adds the first dolichyl beta-D-mannosyl phosphate derived mannose in an alpha-1,3 linkage to Man(5)GlcNAc(2)-PP-dolichol to produce Man(6)GlcNAc(2)-PP-dolichol. Man(6)GlcNAc(2)-PP-dolichol is a substrate for ALG9, the following enzyme in the biosynthetic pathway.</text>
</comment>
<comment type="catalytic activity">
    <reaction evidence="1">
        <text>an alpha-D-Man-(1-&gt;2)-alpha-D-Man-(1-&gt;2)-alpha-D-Man-(1-&gt;3)-[alpha-D-Man-(1-&gt;6)]-beta-D-Man-(1-&gt;4)-beta-D-GlcNAc-(1-&gt;4)-alpha-D-GlcNAc-diphospho-di-trans,poly-cis-dolichol + a di-trans,poly-cis-dolichyl beta-D-mannosyl phosphate = an alpha-D-Man-(1-&gt;2)-alpha-D-Man-(1-&gt;2)-alpha-D-Man-(1-&gt;3)-[alpha-D-Man-(1-&gt;3)-alpha-D-Man-(1-&gt;6)]-beta-D-Man-(1-&gt;4)-beta-D-GlcNAc-(1-&gt;4)-alpha-D-GlcNAc-diphospho-di-trans,poly-cis-dolichol + a di-trans,poly-cis-dolichyl phosphate + H(+)</text>
        <dbReference type="Rhea" id="RHEA:29527"/>
        <dbReference type="Rhea" id="RHEA-COMP:19498"/>
        <dbReference type="Rhea" id="RHEA-COMP:19501"/>
        <dbReference type="Rhea" id="RHEA-COMP:19516"/>
        <dbReference type="Rhea" id="RHEA-COMP:19517"/>
        <dbReference type="ChEBI" id="CHEBI:15378"/>
        <dbReference type="ChEBI" id="CHEBI:57683"/>
        <dbReference type="ChEBI" id="CHEBI:58211"/>
        <dbReference type="ChEBI" id="CHEBI:132515"/>
        <dbReference type="ChEBI" id="CHEBI:132516"/>
        <dbReference type="EC" id="2.4.1.258"/>
    </reaction>
    <physiologicalReaction direction="left-to-right" evidence="1">
        <dbReference type="Rhea" id="RHEA:29528"/>
    </physiologicalReaction>
</comment>
<comment type="pathway">
    <text evidence="1">Protein modification; protein glycosylation.</text>
</comment>
<comment type="subcellular location">
    <subcellularLocation>
        <location evidence="1">Endoplasmic reticulum membrane</location>
        <topology evidence="2">Multi-pass membrane protein</topology>
    </subcellularLocation>
</comment>
<comment type="similarity">
    <text evidence="3">Belongs to the glycosyltransferase ALG3 family.</text>
</comment>
<gene>
    <name evidence="4" type="primary">Alg3</name>
</gene>
<dbReference type="EC" id="2.4.1.258" evidence="1"/>
<dbReference type="EMBL" id="AC087898">
    <property type="status" value="NOT_ANNOTATED_CDS"/>
    <property type="molecule type" value="Genomic_DNA"/>
</dbReference>
<dbReference type="EMBL" id="BC031893">
    <property type="protein sequence ID" value="AAH31893.1"/>
    <property type="molecule type" value="mRNA"/>
</dbReference>
<dbReference type="CCDS" id="CCDS37289.1"/>
<dbReference type="RefSeq" id="NP_666051.2">
    <property type="nucleotide sequence ID" value="NM_145939.3"/>
</dbReference>
<dbReference type="BioGRID" id="228994">
    <property type="interactions" value="3"/>
</dbReference>
<dbReference type="FunCoup" id="Q8K2A8">
    <property type="interactions" value="2027"/>
</dbReference>
<dbReference type="STRING" id="10090.ENSMUSP00000045272"/>
<dbReference type="CAZy" id="GT58">
    <property type="family name" value="Glycosyltransferase Family 58"/>
</dbReference>
<dbReference type="GlyGen" id="Q8K2A8">
    <property type="glycosylation" value="1 site"/>
</dbReference>
<dbReference type="PhosphoSitePlus" id="Q8K2A8"/>
<dbReference type="SwissPalm" id="Q8K2A8"/>
<dbReference type="PaxDb" id="10090-ENSMUSP00000045272"/>
<dbReference type="PeptideAtlas" id="Q8K2A8"/>
<dbReference type="ProteomicsDB" id="296095"/>
<dbReference type="Pumba" id="Q8K2A8"/>
<dbReference type="Antibodypedia" id="52417">
    <property type="antibodies" value="15 antibodies from 11 providers"/>
</dbReference>
<dbReference type="Ensembl" id="ENSMUST00000045918.15">
    <property type="protein sequence ID" value="ENSMUSP00000045272.9"/>
    <property type="gene ID" value="ENSMUSG00000033809.16"/>
</dbReference>
<dbReference type="GeneID" id="208624"/>
<dbReference type="KEGG" id="mmu:208624"/>
<dbReference type="UCSC" id="uc007yqe.2">
    <property type="organism name" value="mouse"/>
</dbReference>
<dbReference type="AGR" id="MGI:1098592"/>
<dbReference type="CTD" id="10195"/>
<dbReference type="MGI" id="MGI:1098592">
    <property type="gene designation" value="Alg3"/>
</dbReference>
<dbReference type="VEuPathDB" id="HostDB:ENSMUSG00000033809"/>
<dbReference type="eggNOG" id="KOG2762">
    <property type="taxonomic scope" value="Eukaryota"/>
</dbReference>
<dbReference type="GeneTree" id="ENSGT00390000013904"/>
<dbReference type="HOGENOM" id="CLU_035382_3_0_1"/>
<dbReference type="InParanoid" id="Q8K2A8"/>
<dbReference type="OMA" id="PERYGIH"/>
<dbReference type="OrthoDB" id="20028at2759"/>
<dbReference type="PhylomeDB" id="Q8K2A8"/>
<dbReference type="TreeFam" id="TF105870"/>
<dbReference type="Reactome" id="R-MMU-446193">
    <property type="pathway name" value="Biosynthesis of the N-glycan precursor (dolichol lipid-linked oligosaccharide, LLO) and transfer to a nascent protein"/>
</dbReference>
<dbReference type="UniPathway" id="UPA00378"/>
<dbReference type="BioGRID-ORCS" id="208624">
    <property type="hits" value="17 hits in 84 CRISPR screens"/>
</dbReference>
<dbReference type="ChiTaRS" id="Psen2">
    <property type="organism name" value="mouse"/>
</dbReference>
<dbReference type="PRO" id="PR:Q8K2A8"/>
<dbReference type="Proteomes" id="UP000000589">
    <property type="component" value="Chromosome 16"/>
</dbReference>
<dbReference type="RNAct" id="Q8K2A8">
    <property type="molecule type" value="protein"/>
</dbReference>
<dbReference type="Bgee" id="ENSMUSG00000033809">
    <property type="expression patterns" value="Expressed in otic placode and 247 other cell types or tissues"/>
</dbReference>
<dbReference type="ExpressionAtlas" id="Q8K2A8">
    <property type="expression patterns" value="baseline and differential"/>
</dbReference>
<dbReference type="GO" id="GO:0005789">
    <property type="term" value="C:endoplasmic reticulum membrane"/>
    <property type="evidence" value="ECO:0000250"/>
    <property type="project" value="UniProtKB"/>
</dbReference>
<dbReference type="GO" id="GO:0052925">
    <property type="term" value="F:dol-P-Man:Man(5)GlcNAc(2)-PP-Dol alpha-1,3-mannosyltransferase activity"/>
    <property type="evidence" value="ECO:0000250"/>
    <property type="project" value="UniProtKB"/>
</dbReference>
<dbReference type="GO" id="GO:0006488">
    <property type="term" value="P:dolichol-linked oligosaccharide biosynthetic process"/>
    <property type="evidence" value="ECO:0000250"/>
    <property type="project" value="UniProtKB"/>
</dbReference>
<dbReference type="GO" id="GO:0006487">
    <property type="term" value="P:protein N-linked glycosylation"/>
    <property type="evidence" value="ECO:0000250"/>
    <property type="project" value="UniProtKB"/>
</dbReference>
<dbReference type="InterPro" id="IPR007873">
    <property type="entry name" value="Glycosyltransferase_ALG3"/>
</dbReference>
<dbReference type="PANTHER" id="PTHR12646:SF0">
    <property type="entry name" value="DOL-P-MAN:MAN(5)GLCNAC(2)-PP-DOL ALPHA-1,3-MANNOSYLTRANSFERASE"/>
    <property type="match status" value="1"/>
</dbReference>
<dbReference type="PANTHER" id="PTHR12646">
    <property type="entry name" value="NOT56 - RELATED"/>
    <property type="match status" value="1"/>
</dbReference>
<dbReference type="Pfam" id="PF05208">
    <property type="entry name" value="ALG3"/>
    <property type="match status" value="1"/>
</dbReference>
<feature type="chain" id="PRO_0000080567" description="Dol-P-Man:Man(5)GlcNAc(2)-PP-Dol alpha-1,3-mannosyltransferase">
    <location>
        <begin position="1"/>
        <end position="438"/>
    </location>
</feature>
<feature type="transmembrane region" description="Helical" evidence="2">
    <location>
        <begin position="41"/>
        <end position="61"/>
    </location>
</feature>
<feature type="transmembrane region" description="Helical" evidence="2">
    <location>
        <begin position="95"/>
        <end position="115"/>
    </location>
</feature>
<feature type="transmembrane region" description="Helical" evidence="2">
    <location>
        <begin position="123"/>
        <end position="143"/>
    </location>
</feature>
<feature type="transmembrane region" description="Helical" evidence="2">
    <location>
        <begin position="149"/>
        <end position="169"/>
    </location>
</feature>
<feature type="transmembrane region" description="Helical" evidence="2">
    <location>
        <begin position="172"/>
        <end position="192"/>
    </location>
</feature>
<feature type="transmembrane region" description="Helical" evidence="2">
    <location>
        <begin position="203"/>
        <end position="223"/>
    </location>
</feature>
<feature type="transmembrane region" description="Helical" evidence="2">
    <location>
        <begin position="231"/>
        <end position="251"/>
    </location>
</feature>
<feature type="transmembrane region" description="Helical" evidence="2">
    <location>
        <begin position="289"/>
        <end position="309"/>
    </location>
</feature>
<feature type="transmembrane region" description="Helical" evidence="2">
    <location>
        <begin position="332"/>
        <end position="352"/>
    </location>
</feature>
<feature type="transmembrane region" description="Helical" evidence="2">
    <location>
        <begin position="356"/>
        <end position="376"/>
    </location>
</feature>
<feature type="transmembrane region" description="Helical" evidence="2">
    <location>
        <begin position="407"/>
        <end position="427"/>
    </location>
</feature>
<feature type="modified residue" description="Phosphoserine" evidence="1">
    <location>
        <position position="13"/>
    </location>
</feature>
<feature type="sequence conflict" description="In Ref. 2; AAH31893." evidence="3" ref="2">
    <original>R</original>
    <variation>H</variation>
    <location>
        <position position="354"/>
    </location>
</feature>
<accession>Q8K2A8</accession>
<accession>E9QKP9</accession>
<protein>
    <recommendedName>
        <fullName evidence="1">Dol-P-Man:Man(5)GlcNAc(2)-PP-Dol alpha-1,3-mannosyltransferase</fullName>
        <ecNumber evidence="1">2.4.1.258</ecNumber>
    </recommendedName>
    <alternativeName>
        <fullName evidence="4">Asparagine-linked glycosylation protein 3 homolog</fullName>
    </alternativeName>
    <alternativeName>
        <fullName>Dol-P-Man-dependent alpha(1-3)-mannosyltransferase</fullName>
    </alternativeName>
    <alternativeName>
        <fullName>Dolichyl-P-Man:Man(5)GlcNAc(2)-PP-dolichyl mannosyltransferase</fullName>
    </alternativeName>
    <alternativeName>
        <fullName>Dolichyl-phosphate-mannose--glycolipid alpha-mannosyltransferase</fullName>
    </alternativeName>
</protein>
<reference key="1">
    <citation type="journal article" date="2009" name="PLoS Biol.">
        <title>Lineage-specific biology revealed by a finished genome assembly of the mouse.</title>
        <authorList>
            <person name="Church D.M."/>
            <person name="Goodstadt L."/>
            <person name="Hillier L.W."/>
            <person name="Zody M.C."/>
            <person name="Goldstein S."/>
            <person name="She X."/>
            <person name="Bult C.J."/>
            <person name="Agarwala R."/>
            <person name="Cherry J.L."/>
            <person name="DiCuccio M."/>
            <person name="Hlavina W."/>
            <person name="Kapustin Y."/>
            <person name="Meric P."/>
            <person name="Maglott D."/>
            <person name="Birtle Z."/>
            <person name="Marques A.C."/>
            <person name="Graves T."/>
            <person name="Zhou S."/>
            <person name="Teague B."/>
            <person name="Potamousis K."/>
            <person name="Churas C."/>
            <person name="Place M."/>
            <person name="Herschleb J."/>
            <person name="Runnheim R."/>
            <person name="Forrest D."/>
            <person name="Amos-Landgraf J."/>
            <person name="Schwartz D.C."/>
            <person name="Cheng Z."/>
            <person name="Lindblad-Toh K."/>
            <person name="Eichler E.E."/>
            <person name="Ponting C.P."/>
        </authorList>
    </citation>
    <scope>NUCLEOTIDE SEQUENCE [LARGE SCALE GENOMIC DNA]</scope>
    <source>
        <strain>C57BL/6J</strain>
    </source>
</reference>
<reference key="2">
    <citation type="journal article" date="2004" name="Genome Res.">
        <title>The status, quality, and expansion of the NIH full-length cDNA project: the Mammalian Gene Collection (MGC).</title>
        <authorList>
            <consortium name="The MGC Project Team"/>
        </authorList>
    </citation>
    <scope>NUCLEOTIDE SEQUENCE [LARGE SCALE MRNA]</scope>
    <source>
        <strain>FVB/N-3</strain>
        <tissue>Mammary tumor</tissue>
    </source>
</reference>
<reference key="3">
    <citation type="journal article" date="2010" name="Cell">
        <title>A tissue-specific atlas of mouse protein phosphorylation and expression.</title>
        <authorList>
            <person name="Huttlin E.L."/>
            <person name="Jedrychowski M.P."/>
            <person name="Elias J.E."/>
            <person name="Goswami T."/>
            <person name="Rad R."/>
            <person name="Beausoleil S.A."/>
            <person name="Villen J."/>
            <person name="Haas W."/>
            <person name="Sowa M.E."/>
            <person name="Gygi S.P."/>
        </authorList>
    </citation>
    <scope>IDENTIFICATION BY MASS SPECTROMETRY [LARGE SCALE ANALYSIS]</scope>
    <source>
        <tissue>Pancreas</tissue>
    </source>
</reference>
<proteinExistence type="evidence at protein level"/>
<keyword id="KW-0256">Endoplasmic reticulum</keyword>
<keyword id="KW-0328">Glycosyltransferase</keyword>
<keyword id="KW-0472">Membrane</keyword>
<keyword id="KW-0597">Phosphoprotein</keyword>
<keyword id="KW-1185">Reference proteome</keyword>
<keyword id="KW-0808">Transferase</keyword>
<keyword id="KW-0812">Transmembrane</keyword>
<keyword id="KW-1133">Transmembrane helix</keyword>